<feature type="chain" id="PRO_0000054291" description="Pancreatic alpha-amylase">
    <location>
        <begin position="1"/>
        <end position="497"/>
    </location>
</feature>
<feature type="active site" description="Nucleophile" evidence="2">
    <location>
        <position position="197"/>
    </location>
</feature>
<feature type="active site" description="Proton donor" evidence="2">
    <location>
        <position position="233"/>
    </location>
</feature>
<feature type="binding site" evidence="2">
    <location>
        <position position="100"/>
    </location>
    <ligand>
        <name>Ca(2+)</name>
        <dbReference type="ChEBI" id="CHEBI:29108"/>
    </ligand>
</feature>
<feature type="binding site" evidence="2">
    <location>
        <position position="158"/>
    </location>
    <ligand>
        <name>Ca(2+)</name>
        <dbReference type="ChEBI" id="CHEBI:29108"/>
    </ligand>
</feature>
<feature type="binding site" evidence="2">
    <location>
        <position position="167"/>
    </location>
    <ligand>
        <name>Ca(2+)</name>
        <dbReference type="ChEBI" id="CHEBI:29108"/>
    </ligand>
</feature>
<feature type="binding site" evidence="2">
    <location>
        <position position="195"/>
    </location>
    <ligand>
        <name>chloride</name>
        <dbReference type="ChEBI" id="CHEBI:17996"/>
    </ligand>
</feature>
<feature type="binding site" evidence="2">
    <location>
        <position position="201"/>
    </location>
    <ligand>
        <name>Ca(2+)</name>
        <dbReference type="ChEBI" id="CHEBI:29108"/>
    </ligand>
</feature>
<feature type="binding site" evidence="2">
    <location>
        <position position="298"/>
    </location>
    <ligand>
        <name>chloride</name>
        <dbReference type="ChEBI" id="CHEBI:17996"/>
    </ligand>
</feature>
<feature type="binding site" evidence="2">
    <location>
        <position position="337"/>
    </location>
    <ligand>
        <name>chloride</name>
        <dbReference type="ChEBI" id="CHEBI:17996"/>
    </ligand>
</feature>
<feature type="site" description="Transition state stabilizer" evidence="2">
    <location>
        <position position="300"/>
    </location>
</feature>
<feature type="modified residue" description="Pyrrolidone carboxylic acid" evidence="3">
    <location>
        <position position="1"/>
    </location>
</feature>
<feature type="disulfide bond" evidence="2">
    <location>
        <begin position="28"/>
        <end position="86"/>
    </location>
</feature>
<feature type="disulfide bond" evidence="2">
    <location>
        <begin position="70"/>
        <end position="115"/>
    </location>
</feature>
<feature type="disulfide bond" evidence="2">
    <location>
        <begin position="141"/>
        <end position="160"/>
    </location>
</feature>
<feature type="disulfide bond" evidence="2">
    <location>
        <begin position="379"/>
        <end position="385"/>
    </location>
</feature>
<feature type="disulfide bond" evidence="2">
    <location>
        <begin position="451"/>
        <end position="463"/>
    </location>
</feature>
<feature type="sequence conflict" description="In Ref. 2; AA sequence." evidence="5" ref="2">
    <original>Y</original>
    <variation>K</variation>
    <location>
        <position position="35"/>
    </location>
</feature>
<feature type="sequence conflict" description="In Ref. 2; AA sequence." evidence="5" ref="2">
    <original>IIT</original>
    <variation>VFN</variation>
    <location>
        <begin position="50"/>
        <end position="52"/>
    </location>
</feature>
<comment type="catalytic activity">
    <reaction evidence="4">
        <text>Endohydrolysis of (1-&gt;4)-alpha-D-glucosidic linkages in polysaccharides containing three or more (1-&gt;4)-alpha-linked D-glucose units.</text>
        <dbReference type="EC" id="3.2.1.1"/>
    </reaction>
</comment>
<comment type="cofactor">
    <cofactor evidence="2">
        <name>Ca(2+)</name>
        <dbReference type="ChEBI" id="CHEBI:29108"/>
    </cofactor>
    <text evidence="2">Binds 1 Ca(2+) ion per subunit.</text>
</comment>
<comment type="cofactor">
    <cofactor evidence="2">
        <name>chloride</name>
        <dbReference type="ChEBI" id="CHEBI:17996"/>
    </cofactor>
    <text evidence="2">Binds 1 Cl(-) ion per subunit.</text>
</comment>
<comment type="subunit">
    <text evidence="1">Monomer.</text>
</comment>
<comment type="subcellular location">
    <subcellularLocation>
        <location>Secreted</location>
        <location>Extracellular space</location>
    </subcellularLocation>
</comment>
<comment type="similarity">
    <text evidence="5">Belongs to the glycosyl hydrolase 13 family.</text>
</comment>
<proteinExistence type="evidence at protein level"/>
<accession>P83053</accession>
<protein>
    <recommendedName>
        <fullName>Pancreatic alpha-amylase</fullName>
        <shortName>PA</shortName>
        <ecNumber evidence="4">3.2.1.1</ecNumber>
    </recommendedName>
    <alternativeName>
        <fullName>1,4-alpha-D-glucan glucanohydrolase</fullName>
    </alternativeName>
</protein>
<organism evidence="5">
    <name type="scientific">Struthio camelus</name>
    <name type="common">Common ostrich</name>
    <dbReference type="NCBI Taxonomy" id="8801"/>
    <lineage>
        <taxon>Eukaryota</taxon>
        <taxon>Metazoa</taxon>
        <taxon>Chordata</taxon>
        <taxon>Craniata</taxon>
        <taxon>Vertebrata</taxon>
        <taxon>Euteleostomi</taxon>
        <taxon>Archelosauria</taxon>
        <taxon>Archosauria</taxon>
        <taxon>Dinosauria</taxon>
        <taxon>Saurischia</taxon>
        <taxon>Theropoda</taxon>
        <taxon>Coelurosauria</taxon>
        <taxon>Aves</taxon>
        <taxon>Palaeognathae</taxon>
        <taxon>Struthioniformes</taxon>
        <taxon>Struthionidae</taxon>
        <taxon>Struthio</taxon>
    </lineage>
</organism>
<dbReference type="EC" id="3.2.1.1" evidence="4"/>
<dbReference type="SMR" id="P83053"/>
<dbReference type="CAZy" id="GH13">
    <property type="family name" value="Glycoside Hydrolase Family 13"/>
</dbReference>
<dbReference type="GO" id="GO:0005576">
    <property type="term" value="C:extracellular region"/>
    <property type="evidence" value="ECO:0007669"/>
    <property type="project" value="UniProtKB-SubCell"/>
</dbReference>
<dbReference type="GO" id="GO:0004556">
    <property type="term" value="F:alpha-amylase activity"/>
    <property type="evidence" value="ECO:0007669"/>
    <property type="project" value="UniProtKB-EC"/>
</dbReference>
<dbReference type="GO" id="GO:0046872">
    <property type="term" value="F:metal ion binding"/>
    <property type="evidence" value="ECO:0007669"/>
    <property type="project" value="UniProtKB-KW"/>
</dbReference>
<dbReference type="GO" id="GO:0005975">
    <property type="term" value="P:carbohydrate metabolic process"/>
    <property type="evidence" value="ECO:0007669"/>
    <property type="project" value="InterPro"/>
</dbReference>
<dbReference type="CDD" id="cd11317">
    <property type="entry name" value="AmyAc_bac_euk_AmyA"/>
    <property type="match status" value="1"/>
</dbReference>
<dbReference type="FunFam" id="2.60.40.1180:FF:000020">
    <property type="entry name" value="Pancreatic alpha-amylase"/>
    <property type="match status" value="1"/>
</dbReference>
<dbReference type="FunFam" id="3.20.20.80:FF:000056">
    <property type="entry name" value="Pancreatic alpha-amylase"/>
    <property type="match status" value="1"/>
</dbReference>
<dbReference type="Gene3D" id="3.20.20.80">
    <property type="entry name" value="Glycosidases"/>
    <property type="match status" value="1"/>
</dbReference>
<dbReference type="Gene3D" id="2.60.40.1180">
    <property type="entry name" value="Golgi alpha-mannosidase II"/>
    <property type="match status" value="1"/>
</dbReference>
<dbReference type="InterPro" id="IPR006048">
    <property type="entry name" value="A-amylase/branching_C"/>
</dbReference>
<dbReference type="InterPro" id="IPR031319">
    <property type="entry name" value="A-amylase_C"/>
</dbReference>
<dbReference type="InterPro" id="IPR006046">
    <property type="entry name" value="Alpha_amylase"/>
</dbReference>
<dbReference type="InterPro" id="IPR006047">
    <property type="entry name" value="Glyco_hydro_13_cat_dom"/>
</dbReference>
<dbReference type="InterPro" id="IPR013780">
    <property type="entry name" value="Glyco_hydro_b"/>
</dbReference>
<dbReference type="InterPro" id="IPR017853">
    <property type="entry name" value="Glycoside_hydrolase_SF"/>
</dbReference>
<dbReference type="PANTHER" id="PTHR43447">
    <property type="entry name" value="ALPHA-AMYLASE"/>
    <property type="match status" value="1"/>
</dbReference>
<dbReference type="Pfam" id="PF00128">
    <property type="entry name" value="Alpha-amylase"/>
    <property type="match status" value="1"/>
</dbReference>
<dbReference type="Pfam" id="PF02806">
    <property type="entry name" value="Alpha-amylase_C"/>
    <property type="match status" value="1"/>
</dbReference>
<dbReference type="PRINTS" id="PR00110">
    <property type="entry name" value="ALPHAAMYLASE"/>
</dbReference>
<dbReference type="SMART" id="SM00642">
    <property type="entry name" value="Aamy"/>
    <property type="match status" value="1"/>
</dbReference>
<dbReference type="SMART" id="SM00632">
    <property type="entry name" value="Aamy_C"/>
    <property type="match status" value="1"/>
</dbReference>
<dbReference type="SUPFAM" id="SSF51445">
    <property type="entry name" value="(Trans)glycosidases"/>
    <property type="match status" value="1"/>
</dbReference>
<dbReference type="SUPFAM" id="SSF51011">
    <property type="entry name" value="Glycosyl hydrolase domain"/>
    <property type="match status" value="1"/>
</dbReference>
<sequence>QYNPNTQPGRTSIVHLFEWRWADIALECERYLAPYGFGGVQVSPPNENVIITNPYRPWWERYQPVSYKLCTRSGNENEFRDMVTRCNNVGVRIYVDAVKNHMCGSGAGSGTHSTCGAYFNAGNRDSPAVPYSGWDFNDGKCRTGSGEIENYGDASQVRDCRLVGLLDLALEKDYVRSTVAGYMNHLIDIGVAGFRLDAAKHMWPGDIKAFLDKLHNLNTNWFSSGSRPFIYQEVIDLGGEPITSSQYFGNHRVTEFKYGAKLGTVIRKWNGEKMAYLKNWGEGWGFVPSDRALVFVDNHDNQRGHGAGGASILTFWDARLYKMAVGFMLAHPYGFTRVMSSFRWPRHFENGKDVNDWYGPPSNSDGSTKEVTINADSTCGNDWVCEHRWRQIRNMVIFRNVVDGEPFSNWWDNNSNQVAFGRGSKGFIVFNNDDWHMNVDLYTGLPAGTYCDVISGQKEGSRCTGIQVYVSGNGKANFQISNNAEDPFIAIHVGAKL</sequence>
<keyword id="KW-0106">Calcium</keyword>
<keyword id="KW-0119">Carbohydrate metabolism</keyword>
<keyword id="KW-0868">Chloride</keyword>
<keyword id="KW-0903">Direct protein sequencing</keyword>
<keyword id="KW-1015">Disulfide bond</keyword>
<keyword id="KW-0326">Glycosidase</keyword>
<keyword id="KW-0378">Hydrolase</keyword>
<keyword id="KW-0479">Metal-binding</keyword>
<keyword id="KW-0873">Pyrrolidone carboxylic acid</keyword>
<keyword id="KW-0964">Secreted</keyword>
<reference evidence="5" key="1">
    <citation type="journal article" date="2000" name="Comp. Biochem. Physiol.">
        <title>The amino acid sequence of pancreatic alpha-amylase from the ostrich, Struthio camelus.</title>
        <authorList>
            <person name="Kabuto S."/>
            <person name="Ogawa T."/>
            <person name="Muramoto K."/>
            <person name="Oosthuizen V."/>
            <person name="Naude R.J."/>
        </authorList>
    </citation>
    <scope>PROTEIN SEQUENCE</scope>
    <scope>PYROGLUTAMATE FORMATION AT GLN-1</scope>
    <source>
        <tissue>Pancreas</tissue>
    </source>
</reference>
<reference evidence="5" key="2">
    <citation type="journal article" date="1994" name="Int. J. Biochem.">
        <title>Ostrich pancreatic alpha-amylase: kinetic properties, amino terminal sequence and subsite structure.</title>
        <authorList>
            <person name="Oosthuizen V."/>
            <person name="Naude R.J."/>
            <person name="Oelofsen W."/>
            <person name="Muramoto K."/>
            <person name="Kamiya H."/>
        </authorList>
    </citation>
    <scope>PROTEIN SEQUENCE OF 1-53</scope>
    <scope>CATALYTIC ACTIVITY</scope>
    <source>
        <tissue>Pancreas</tissue>
    </source>
</reference>
<evidence type="ECO:0000250" key="1"/>
<evidence type="ECO:0000250" key="2">
    <source>
        <dbReference type="UniProtKB" id="P04746"/>
    </source>
</evidence>
<evidence type="ECO:0000269" key="3">
    <source>
    </source>
</evidence>
<evidence type="ECO:0000269" key="4">
    <source ref="2"/>
</evidence>
<evidence type="ECO:0000305" key="5"/>
<name>AMYP_STRCA</name>